<comment type="function">
    <text evidence="1">Part of the ABC transporter complex LolCDE involved in the translocation of mature outer membrane-directed lipoproteins, from the inner membrane to the periplasmic chaperone, LolA. Responsible for the formation of the LolA-lipoprotein complex in an ATP-dependent manner.</text>
</comment>
<comment type="subunit">
    <text evidence="1">The complex is composed of two ATP-binding proteins (LolD) and two transmembrane proteins (LolC and LolE).</text>
</comment>
<comment type="subcellular location">
    <subcellularLocation>
        <location evidence="1">Cell inner membrane</location>
        <topology evidence="1">Peripheral membrane protein</topology>
    </subcellularLocation>
</comment>
<comment type="similarity">
    <text evidence="1">Belongs to the ABC transporter superfamily. Lipoprotein translocase (TC 3.A.1.125) family.</text>
</comment>
<sequence length="221" mass="24526">MSNKILTLKNVSKHYRQGNSIIRVLDDLNLNINEGELIAIIGSSGSGKSTLLHIAGLLDKPTNGEVIIANNEYKTNHLIRLNYLGFIYQQHHLLKDFTAIENVIMPRLINGSNQKEAIEAAKSILDSLGLGKKLHNMPGELSGGEQQRVAIARSLINKPKIILADEPTGNLDPKTTNEVFNLFLKVAKEQNTAIVMVTHNHELAHRMDKLYKLKHGALNMS</sequence>
<protein>
    <recommendedName>
        <fullName evidence="1">Lipoprotein-releasing system ATP-binding protein LolD</fullName>
        <ecNumber evidence="1">7.6.2.-</ecNumber>
    </recommendedName>
</protein>
<organism>
    <name type="scientific">Rickettsia bellii (strain RML369-C)</name>
    <dbReference type="NCBI Taxonomy" id="336407"/>
    <lineage>
        <taxon>Bacteria</taxon>
        <taxon>Pseudomonadati</taxon>
        <taxon>Pseudomonadota</taxon>
        <taxon>Alphaproteobacteria</taxon>
        <taxon>Rickettsiales</taxon>
        <taxon>Rickettsiaceae</taxon>
        <taxon>Rickettsieae</taxon>
        <taxon>Rickettsia</taxon>
        <taxon>belli group</taxon>
    </lineage>
</organism>
<proteinExistence type="inferred from homology"/>
<gene>
    <name evidence="1" type="primary">lolD</name>
    <name type="ordered locus">RBE_0199</name>
</gene>
<reference key="1">
    <citation type="journal article" date="2006" name="PLoS Genet.">
        <title>Genome sequence of Rickettsia bellii illuminates the role of amoebae in gene exchanges between intracellular pathogens.</title>
        <authorList>
            <person name="Ogata H."/>
            <person name="La Scola B."/>
            <person name="Audic S."/>
            <person name="Renesto P."/>
            <person name="Blanc G."/>
            <person name="Robert C."/>
            <person name="Fournier P.-E."/>
            <person name="Claverie J.-M."/>
            <person name="Raoult D."/>
        </authorList>
    </citation>
    <scope>NUCLEOTIDE SEQUENCE [LARGE SCALE GENOMIC DNA]</scope>
    <source>
        <strain>RML369-C</strain>
    </source>
</reference>
<evidence type="ECO:0000255" key="1">
    <source>
        <dbReference type="HAMAP-Rule" id="MF_01708"/>
    </source>
</evidence>
<name>LOLD_RICBR</name>
<keyword id="KW-0067">ATP-binding</keyword>
<keyword id="KW-0997">Cell inner membrane</keyword>
<keyword id="KW-1003">Cell membrane</keyword>
<keyword id="KW-0472">Membrane</keyword>
<keyword id="KW-0547">Nucleotide-binding</keyword>
<keyword id="KW-1278">Translocase</keyword>
<keyword id="KW-0813">Transport</keyword>
<accession>Q1RK34</accession>
<dbReference type="EC" id="7.6.2.-" evidence="1"/>
<dbReference type="EMBL" id="CP000087">
    <property type="protein sequence ID" value="ABE04280.1"/>
    <property type="molecule type" value="Genomic_DNA"/>
</dbReference>
<dbReference type="RefSeq" id="WP_011476894.1">
    <property type="nucleotide sequence ID" value="NC_007940.1"/>
</dbReference>
<dbReference type="SMR" id="Q1RK34"/>
<dbReference type="KEGG" id="rbe:RBE_0199"/>
<dbReference type="eggNOG" id="COG1136">
    <property type="taxonomic scope" value="Bacteria"/>
</dbReference>
<dbReference type="HOGENOM" id="CLU_000604_1_22_5"/>
<dbReference type="OrthoDB" id="9802264at2"/>
<dbReference type="Proteomes" id="UP000001951">
    <property type="component" value="Chromosome"/>
</dbReference>
<dbReference type="GO" id="GO:0005886">
    <property type="term" value="C:plasma membrane"/>
    <property type="evidence" value="ECO:0007669"/>
    <property type="project" value="UniProtKB-SubCell"/>
</dbReference>
<dbReference type="GO" id="GO:0005524">
    <property type="term" value="F:ATP binding"/>
    <property type="evidence" value="ECO:0007669"/>
    <property type="project" value="UniProtKB-KW"/>
</dbReference>
<dbReference type="GO" id="GO:0016887">
    <property type="term" value="F:ATP hydrolysis activity"/>
    <property type="evidence" value="ECO:0007669"/>
    <property type="project" value="InterPro"/>
</dbReference>
<dbReference type="GO" id="GO:0022857">
    <property type="term" value="F:transmembrane transporter activity"/>
    <property type="evidence" value="ECO:0007669"/>
    <property type="project" value="TreeGrafter"/>
</dbReference>
<dbReference type="GO" id="GO:0044874">
    <property type="term" value="P:lipoprotein localization to outer membrane"/>
    <property type="evidence" value="ECO:0007669"/>
    <property type="project" value="TreeGrafter"/>
</dbReference>
<dbReference type="GO" id="GO:0089705">
    <property type="term" value="P:protein localization to outer membrane"/>
    <property type="evidence" value="ECO:0007669"/>
    <property type="project" value="TreeGrafter"/>
</dbReference>
<dbReference type="CDD" id="cd03255">
    <property type="entry name" value="ABC_MJ0796_LolCDE_FtsE"/>
    <property type="match status" value="1"/>
</dbReference>
<dbReference type="FunFam" id="3.40.50.300:FF:000032">
    <property type="entry name" value="Export ABC transporter ATP-binding protein"/>
    <property type="match status" value="1"/>
</dbReference>
<dbReference type="Gene3D" id="3.40.50.300">
    <property type="entry name" value="P-loop containing nucleotide triphosphate hydrolases"/>
    <property type="match status" value="1"/>
</dbReference>
<dbReference type="InterPro" id="IPR003593">
    <property type="entry name" value="AAA+_ATPase"/>
</dbReference>
<dbReference type="InterPro" id="IPR003439">
    <property type="entry name" value="ABC_transporter-like_ATP-bd"/>
</dbReference>
<dbReference type="InterPro" id="IPR017871">
    <property type="entry name" value="ABC_transporter-like_CS"/>
</dbReference>
<dbReference type="InterPro" id="IPR015854">
    <property type="entry name" value="ABC_transpr_LolD-like"/>
</dbReference>
<dbReference type="InterPro" id="IPR017911">
    <property type="entry name" value="MacB-like_ATP-bd"/>
</dbReference>
<dbReference type="InterPro" id="IPR027417">
    <property type="entry name" value="P-loop_NTPase"/>
</dbReference>
<dbReference type="PANTHER" id="PTHR24220">
    <property type="entry name" value="IMPORT ATP-BINDING PROTEIN"/>
    <property type="match status" value="1"/>
</dbReference>
<dbReference type="PANTHER" id="PTHR24220:SF689">
    <property type="entry name" value="LIPOPROTEIN-RELEASING SYSTEM ATP-BINDING PROTEIN LOLD"/>
    <property type="match status" value="1"/>
</dbReference>
<dbReference type="Pfam" id="PF00005">
    <property type="entry name" value="ABC_tran"/>
    <property type="match status" value="1"/>
</dbReference>
<dbReference type="SMART" id="SM00382">
    <property type="entry name" value="AAA"/>
    <property type="match status" value="1"/>
</dbReference>
<dbReference type="SUPFAM" id="SSF52540">
    <property type="entry name" value="P-loop containing nucleoside triphosphate hydrolases"/>
    <property type="match status" value="1"/>
</dbReference>
<dbReference type="PROSITE" id="PS00211">
    <property type="entry name" value="ABC_TRANSPORTER_1"/>
    <property type="match status" value="1"/>
</dbReference>
<dbReference type="PROSITE" id="PS50893">
    <property type="entry name" value="ABC_TRANSPORTER_2"/>
    <property type="match status" value="1"/>
</dbReference>
<dbReference type="PROSITE" id="PS51244">
    <property type="entry name" value="LOLD"/>
    <property type="match status" value="1"/>
</dbReference>
<feature type="chain" id="PRO_0000260196" description="Lipoprotein-releasing system ATP-binding protein LolD">
    <location>
        <begin position="1"/>
        <end position="221"/>
    </location>
</feature>
<feature type="domain" description="ABC transporter" evidence="1">
    <location>
        <begin position="6"/>
        <end position="220"/>
    </location>
</feature>
<feature type="binding site" evidence="1">
    <location>
        <begin position="42"/>
        <end position="49"/>
    </location>
    <ligand>
        <name>ATP</name>
        <dbReference type="ChEBI" id="CHEBI:30616"/>
    </ligand>
</feature>